<reference key="1">
    <citation type="journal article" date="2004" name="Mol. Biol. Evol.">
        <title>Human-specific amino acid changes found in 103 protein-coding genes.</title>
        <authorList>
            <person name="Kitano T."/>
            <person name="Liu Y.-H."/>
            <person name="Ueda S."/>
            <person name="Saitou N."/>
        </authorList>
    </citation>
    <scope>NUCLEOTIDE SEQUENCE [GENOMIC DNA]</scope>
</reference>
<accession>Q9N297</accession>
<feature type="chain" id="PRO_0000068902" description="5-hydroxytryptamine receptor 1A">
    <location>
        <begin position="1"/>
        <end position="422"/>
    </location>
</feature>
<feature type="topological domain" description="Extracellular" evidence="1">
    <location>
        <begin position="1"/>
        <end position="38"/>
    </location>
</feature>
<feature type="transmembrane region" description="Helical; Name=1" evidence="1">
    <location>
        <begin position="39"/>
        <end position="59"/>
    </location>
</feature>
<feature type="topological domain" description="Cytoplasmic" evidence="1">
    <location>
        <begin position="60"/>
        <end position="73"/>
    </location>
</feature>
<feature type="transmembrane region" description="Helical; Name=2" evidence="1">
    <location>
        <begin position="74"/>
        <end position="98"/>
    </location>
</feature>
<feature type="topological domain" description="Extracellular" evidence="1">
    <location>
        <begin position="99"/>
        <end position="107"/>
    </location>
</feature>
<feature type="transmembrane region" description="Helical; Name=3" evidence="1">
    <location>
        <begin position="108"/>
        <end position="132"/>
    </location>
</feature>
<feature type="topological domain" description="Cytoplasmic" evidence="1">
    <location>
        <begin position="133"/>
        <end position="152"/>
    </location>
</feature>
<feature type="transmembrane region" description="Helical; Name=4" evidence="1">
    <location>
        <begin position="153"/>
        <end position="174"/>
    </location>
</feature>
<feature type="topological domain" description="Extracellular" evidence="1">
    <location>
        <begin position="175"/>
        <end position="193"/>
    </location>
</feature>
<feature type="transmembrane region" description="Helical; Name=5" evidence="1">
    <location>
        <begin position="194"/>
        <end position="216"/>
    </location>
</feature>
<feature type="topological domain" description="Cytoplasmic" evidence="1">
    <location>
        <begin position="217"/>
        <end position="346"/>
    </location>
</feature>
<feature type="transmembrane region" description="Helical; Name=6" evidence="1">
    <location>
        <begin position="347"/>
        <end position="370"/>
    </location>
</feature>
<feature type="topological domain" description="Extracellular" evidence="1">
    <location>
        <begin position="371"/>
        <end position="378"/>
    </location>
</feature>
<feature type="transmembrane region" description="Helical; Name=7" evidence="1">
    <location>
        <begin position="379"/>
        <end position="403"/>
    </location>
</feature>
<feature type="topological domain" description="Cytoplasmic" evidence="1">
    <location>
        <begin position="404"/>
        <end position="422"/>
    </location>
</feature>
<feature type="region of interest" description="Disordered" evidence="6">
    <location>
        <begin position="1"/>
        <end position="23"/>
    </location>
</feature>
<feature type="region of interest" description="Disordered" evidence="6">
    <location>
        <begin position="235"/>
        <end position="262"/>
    </location>
</feature>
<feature type="short sequence motif" description="DRY motif; important for ligand-induced conformation changes" evidence="3">
    <location>
        <begin position="133"/>
        <end position="135"/>
    </location>
</feature>
<feature type="short sequence motif" description="NPxxY motif; important for ligand-induced conformation changes and signaling" evidence="3">
    <location>
        <begin position="396"/>
        <end position="400"/>
    </location>
</feature>
<feature type="binding site" evidence="1">
    <location>
        <position position="116"/>
    </location>
    <ligand>
        <name>serotonin</name>
        <dbReference type="ChEBI" id="CHEBI:350546"/>
    </ligand>
</feature>
<feature type="binding site" evidence="1">
    <location>
        <position position="120"/>
    </location>
    <ligand>
        <name>serotonin</name>
        <dbReference type="ChEBI" id="CHEBI:350546"/>
    </ligand>
</feature>
<feature type="binding site" evidence="1">
    <location>
        <position position="314"/>
    </location>
    <ligand>
        <name>1D-myo-inositol 4-phosphate</name>
        <dbReference type="ChEBI" id="CHEBI:58469"/>
    </ligand>
</feature>
<feature type="binding site" evidence="1">
    <location>
        <position position="345"/>
    </location>
    <ligand>
        <name>1D-myo-inositol 4-phosphate</name>
        <dbReference type="ChEBI" id="CHEBI:58469"/>
    </ligand>
</feature>
<feature type="binding site" evidence="1">
    <location>
        <position position="346"/>
    </location>
    <ligand>
        <name>1D-myo-inositol 4-phosphate</name>
        <dbReference type="ChEBI" id="CHEBI:58469"/>
    </ligand>
</feature>
<feature type="binding site" evidence="1">
    <location>
        <position position="352"/>
    </location>
    <ligand>
        <name>1D-myo-inositol 4-phosphate</name>
        <dbReference type="ChEBI" id="CHEBI:58469"/>
    </ligand>
</feature>
<feature type="binding site" evidence="1">
    <location>
        <position position="403"/>
    </location>
    <ligand>
        <name>1D-myo-inositol 4-phosphate</name>
        <dbReference type="ChEBI" id="CHEBI:58469"/>
    </ligand>
</feature>
<feature type="binding site" evidence="1">
    <location>
        <position position="404"/>
    </location>
    <ligand>
        <name>1D-myo-inositol 4-phosphate</name>
        <dbReference type="ChEBI" id="CHEBI:58469"/>
    </ligand>
</feature>
<feature type="binding site" evidence="1">
    <location>
        <position position="405"/>
    </location>
    <ligand>
        <name>1D-myo-inositol 4-phosphate</name>
        <dbReference type="ChEBI" id="CHEBI:58469"/>
    </ligand>
</feature>
<feature type="glycosylation site" description="N-linked (GlcNAc...) asparagine" evidence="4">
    <location>
        <position position="10"/>
    </location>
</feature>
<feature type="glycosylation site" description="N-linked (GlcNAc...) asparagine" evidence="4">
    <location>
        <position position="11"/>
    </location>
</feature>
<feature type="glycosylation site" description="N-linked (GlcNAc...) asparagine" evidence="4">
    <location>
        <position position="24"/>
    </location>
</feature>
<feature type="disulfide bond" evidence="5">
    <location>
        <begin position="109"/>
        <end position="187"/>
    </location>
</feature>
<gene>
    <name type="primary">HTR1A</name>
</gene>
<comment type="function">
    <text evidence="1">G-protein coupled receptor for 5-hydroxytryptamine (serotonin). Also functions as a receptor for various drugs and psychoactive substances. Ligand binding causes a conformation change that triggers signaling via guanine nucleotide-binding proteins (G proteins) and modulates the activity of downstream effectors, such as adenylate cyclase. HTR1A is coupled to G(i)/G(o) G alpha proteins and mediates inhibitory neurotransmission: signaling inhibits adenylate cyclase activity and activates a phosphatidylinositol-calcium second messenger system that regulates the release of Ca(2+) ions from intracellular stores. Beta-arrestin family members regulate signaling by mediating both receptor desensitization and resensitization processes.</text>
</comment>
<comment type="activity regulation">
    <text evidence="1">G-protein coupled receptor activity is regulated by lipids: phosphatidylinositol 4-phosphate increases HTR1A-mediated activity.</text>
</comment>
<comment type="subunit">
    <text evidence="1 2">Heterodimer; heterodimerizes with GPER1 (By similarity). Interacts with YIF1B (By similarity). Interacts with GPR39 and GALR1 (By similarity).</text>
</comment>
<comment type="subcellular location">
    <subcellularLocation>
        <location evidence="1">Cell membrane</location>
        <topology evidence="1">Multi-pass membrane protein</topology>
    </subcellularLocation>
    <subcellularLocation>
        <location evidence="2">Cell projection</location>
        <location evidence="2">Dendrite</location>
    </subcellularLocation>
</comment>
<comment type="similarity">
    <text evidence="5">Belongs to the G-protein coupled receptor 1 family. 5-hydroxytryptamine receptor subfamily. HTR1A sub-subfamily.</text>
</comment>
<protein>
    <recommendedName>
        <fullName>5-hydroxytryptamine receptor 1A</fullName>
        <shortName>5-HT-1A</shortName>
        <shortName>5-HT1A</shortName>
    </recommendedName>
    <alternativeName>
        <fullName>Serotonin receptor 1A</fullName>
    </alternativeName>
</protein>
<evidence type="ECO:0000250" key="1">
    <source>
        <dbReference type="UniProtKB" id="P08908"/>
    </source>
</evidence>
<evidence type="ECO:0000250" key="2">
    <source>
        <dbReference type="UniProtKB" id="P19327"/>
    </source>
</evidence>
<evidence type="ECO:0000250" key="3">
    <source>
        <dbReference type="UniProtKB" id="P41595"/>
    </source>
</evidence>
<evidence type="ECO:0000255" key="4"/>
<evidence type="ECO:0000255" key="5">
    <source>
        <dbReference type="PROSITE-ProRule" id="PRU00521"/>
    </source>
</evidence>
<evidence type="ECO:0000256" key="6">
    <source>
        <dbReference type="SAM" id="MobiDB-lite"/>
    </source>
</evidence>
<proteinExistence type="inferred from homology"/>
<name>5HT1A_GORGO</name>
<sequence>MDVLSPGQGNNTTSPPAPFETGGNTTGISDVTFSYQVITSLLLGTLIFCAVLGNACVVAAIALERSLQNVANYLIGSLAVTDLMVSVLVLPMAALYQVLNKWTLGQVTCDLFIALDVLCCTSSILHLCAIALDRYWAITDPIDYVNKRTPRRAAALISLTWLIGFLISIPPMLGWRTPEDRSDPDACTISKDHGYTIYSTFGAFYIPLLLMLVLYGRIFRAARFRIRKTVKKVEKTGADTRHGASPAPQPKKSVNGESGSRNWRLGVESKAGGALCANGAVRQGDDGAALEVIEVHRVGNSKEHLPLPSEAGPTPCAPASFERKNERNAEAKRKMALARERKTVKTLGIIMGTFILCWLPFFIVALVLPFCESSCHMPTLLGAIINWLGYSNSLLNPVIYAYFNKDFQNAFKKIIKCKFCRQ</sequence>
<keyword id="KW-0085">Behavior</keyword>
<keyword id="KW-1003">Cell membrane</keyword>
<keyword id="KW-0966">Cell projection</keyword>
<keyword id="KW-1015">Disulfide bond</keyword>
<keyword id="KW-0297">G-protein coupled receptor</keyword>
<keyword id="KW-0325">Glycoprotein</keyword>
<keyword id="KW-0472">Membrane</keyword>
<keyword id="KW-0675">Receptor</keyword>
<keyword id="KW-1185">Reference proteome</keyword>
<keyword id="KW-0807">Transducer</keyword>
<keyword id="KW-0812">Transmembrane</keyword>
<keyword id="KW-1133">Transmembrane helix</keyword>
<organism>
    <name type="scientific">Gorilla gorilla gorilla</name>
    <name type="common">Western lowland gorilla</name>
    <dbReference type="NCBI Taxonomy" id="9595"/>
    <lineage>
        <taxon>Eukaryota</taxon>
        <taxon>Metazoa</taxon>
        <taxon>Chordata</taxon>
        <taxon>Craniata</taxon>
        <taxon>Vertebrata</taxon>
        <taxon>Euteleostomi</taxon>
        <taxon>Mammalia</taxon>
        <taxon>Eutheria</taxon>
        <taxon>Euarchontoglires</taxon>
        <taxon>Primates</taxon>
        <taxon>Haplorrhini</taxon>
        <taxon>Catarrhini</taxon>
        <taxon>Hominidae</taxon>
        <taxon>Gorilla</taxon>
    </lineage>
</organism>
<dbReference type="EMBL" id="AB041405">
    <property type="protein sequence ID" value="BAA94490.1"/>
    <property type="molecule type" value="Genomic_DNA"/>
</dbReference>
<dbReference type="RefSeq" id="XP_004058839.3">
    <property type="nucleotide sequence ID" value="XM_004058791.5"/>
</dbReference>
<dbReference type="SMR" id="Q9N297"/>
<dbReference type="FunCoup" id="Q9N297">
    <property type="interactions" value="987"/>
</dbReference>
<dbReference type="STRING" id="9593.ENSGGOP00000005548"/>
<dbReference type="GlyCosmos" id="Q9N297">
    <property type="glycosylation" value="3 sites, No reported glycans"/>
</dbReference>
<dbReference type="Ensembl" id="ENSGGOT00000005692.3">
    <property type="protein sequence ID" value="ENSGGOP00000005548.2"/>
    <property type="gene ID" value="ENSGGOG00000005667.3"/>
</dbReference>
<dbReference type="GeneID" id="101145070"/>
<dbReference type="KEGG" id="ggo:101145070"/>
<dbReference type="CTD" id="3350"/>
<dbReference type="eggNOG" id="KOG3656">
    <property type="taxonomic scope" value="Eukaryota"/>
</dbReference>
<dbReference type="GeneTree" id="ENSGT00940000154484"/>
<dbReference type="HOGENOM" id="CLU_009579_11_1_1"/>
<dbReference type="InParanoid" id="Q9N297"/>
<dbReference type="OMA" id="VQHCNSS"/>
<dbReference type="Proteomes" id="UP000001519">
    <property type="component" value="Chromosome 17"/>
</dbReference>
<dbReference type="Bgee" id="ENSGGOG00000005667">
    <property type="expression patterns" value="Expressed in prefrontal cortex"/>
</dbReference>
<dbReference type="GO" id="GO:0030425">
    <property type="term" value="C:dendrite"/>
    <property type="evidence" value="ECO:0000318"/>
    <property type="project" value="GO_Central"/>
</dbReference>
<dbReference type="GO" id="GO:0005886">
    <property type="term" value="C:plasma membrane"/>
    <property type="evidence" value="ECO:0000250"/>
    <property type="project" value="UniProtKB"/>
</dbReference>
<dbReference type="GO" id="GO:0045202">
    <property type="term" value="C:synapse"/>
    <property type="evidence" value="ECO:0007669"/>
    <property type="project" value="GOC"/>
</dbReference>
<dbReference type="GO" id="GO:0004993">
    <property type="term" value="F:G protein-coupled serotonin receptor activity"/>
    <property type="evidence" value="ECO:0000250"/>
    <property type="project" value="UniProtKB"/>
</dbReference>
<dbReference type="GO" id="GO:0001586">
    <property type="term" value="F:Gi/o-coupled serotonin receptor activity"/>
    <property type="evidence" value="ECO:0007669"/>
    <property type="project" value="Ensembl"/>
</dbReference>
<dbReference type="GO" id="GO:0030594">
    <property type="term" value="F:neurotransmitter receptor activity"/>
    <property type="evidence" value="ECO:0000318"/>
    <property type="project" value="GO_Central"/>
</dbReference>
<dbReference type="GO" id="GO:0090722">
    <property type="term" value="F:receptor-receptor interaction"/>
    <property type="evidence" value="ECO:0007669"/>
    <property type="project" value="Ensembl"/>
</dbReference>
<dbReference type="GO" id="GO:0051378">
    <property type="term" value="F:serotonin binding"/>
    <property type="evidence" value="ECO:0000318"/>
    <property type="project" value="GO_Central"/>
</dbReference>
<dbReference type="GO" id="GO:0099589">
    <property type="term" value="F:serotonin receptor activity"/>
    <property type="evidence" value="ECO:0007669"/>
    <property type="project" value="Ensembl"/>
</dbReference>
<dbReference type="GO" id="GO:0007198">
    <property type="term" value="P:adenylate cyclase-inhibiting serotonin receptor signaling pathway"/>
    <property type="evidence" value="ECO:0000250"/>
    <property type="project" value="UniProtKB"/>
</dbReference>
<dbReference type="GO" id="GO:0001662">
    <property type="term" value="P:behavioral fear response"/>
    <property type="evidence" value="ECO:0000250"/>
    <property type="project" value="UniProtKB"/>
</dbReference>
<dbReference type="GO" id="GO:0007268">
    <property type="term" value="P:chemical synaptic transmission"/>
    <property type="evidence" value="ECO:0000318"/>
    <property type="project" value="GO_Central"/>
</dbReference>
<dbReference type="GO" id="GO:0035640">
    <property type="term" value="P:exploration behavior"/>
    <property type="evidence" value="ECO:0000250"/>
    <property type="project" value="UniProtKB"/>
</dbReference>
<dbReference type="GO" id="GO:0007187">
    <property type="term" value="P:G protein-coupled receptor signaling pathway, coupled to cyclic nucleotide second messenger"/>
    <property type="evidence" value="ECO:0000318"/>
    <property type="project" value="GO_Central"/>
</dbReference>
<dbReference type="GO" id="GO:0007214">
    <property type="term" value="P:gamma-aminobutyric acid signaling pathway"/>
    <property type="evidence" value="ECO:0007669"/>
    <property type="project" value="Ensembl"/>
</dbReference>
<dbReference type="GO" id="GO:0050795">
    <property type="term" value="P:regulation of behavior"/>
    <property type="evidence" value="ECO:0007669"/>
    <property type="project" value="InterPro"/>
</dbReference>
<dbReference type="GO" id="GO:0042053">
    <property type="term" value="P:regulation of dopamine metabolic process"/>
    <property type="evidence" value="ECO:0000250"/>
    <property type="project" value="UniProtKB"/>
</dbReference>
<dbReference type="GO" id="GO:0046883">
    <property type="term" value="P:regulation of hormone secretion"/>
    <property type="evidence" value="ECO:0007669"/>
    <property type="project" value="InterPro"/>
</dbReference>
<dbReference type="GO" id="GO:0014062">
    <property type="term" value="P:regulation of serotonin secretion"/>
    <property type="evidence" value="ECO:0000250"/>
    <property type="project" value="UniProtKB"/>
</dbReference>
<dbReference type="GO" id="GO:0019229">
    <property type="term" value="P:regulation of vasoconstriction"/>
    <property type="evidence" value="ECO:0007669"/>
    <property type="project" value="InterPro"/>
</dbReference>
<dbReference type="GO" id="GO:0042428">
    <property type="term" value="P:serotonin metabolic process"/>
    <property type="evidence" value="ECO:0000250"/>
    <property type="project" value="UniProtKB"/>
</dbReference>
<dbReference type="GO" id="GO:0007210">
    <property type="term" value="P:serotonin receptor signaling pathway"/>
    <property type="evidence" value="ECO:0000250"/>
    <property type="project" value="UniProtKB"/>
</dbReference>
<dbReference type="CDD" id="cd15330">
    <property type="entry name" value="7tmA_5-HT1A_vertebrates"/>
    <property type="match status" value="1"/>
</dbReference>
<dbReference type="Gene3D" id="1.20.1070.10">
    <property type="entry name" value="Rhodopsin 7-helix transmembrane proteins"/>
    <property type="match status" value="1"/>
</dbReference>
<dbReference type="InterPro" id="IPR000610">
    <property type="entry name" value="5HT1A_rcpt"/>
</dbReference>
<dbReference type="InterPro" id="IPR002231">
    <property type="entry name" value="5HT_rcpt"/>
</dbReference>
<dbReference type="InterPro" id="IPR000276">
    <property type="entry name" value="GPCR_Rhodpsn"/>
</dbReference>
<dbReference type="InterPro" id="IPR017452">
    <property type="entry name" value="GPCR_Rhodpsn_7TM"/>
</dbReference>
<dbReference type="PANTHER" id="PTHR24248:SF191">
    <property type="entry name" value="5-HYDROXYTRYPTAMINE RECEPTOR 1A"/>
    <property type="match status" value="1"/>
</dbReference>
<dbReference type="PANTHER" id="PTHR24248">
    <property type="entry name" value="ADRENERGIC RECEPTOR-RELATED G-PROTEIN COUPLED RECEPTOR"/>
    <property type="match status" value="1"/>
</dbReference>
<dbReference type="Pfam" id="PF00001">
    <property type="entry name" value="7tm_1"/>
    <property type="match status" value="1"/>
</dbReference>
<dbReference type="PRINTS" id="PR00512">
    <property type="entry name" value="5HT1ARECEPTR"/>
</dbReference>
<dbReference type="PRINTS" id="PR01101">
    <property type="entry name" value="5HTRECEPTOR"/>
</dbReference>
<dbReference type="PRINTS" id="PR00237">
    <property type="entry name" value="GPCRRHODOPSN"/>
</dbReference>
<dbReference type="SMART" id="SM01381">
    <property type="entry name" value="7TM_GPCR_Srsx"/>
    <property type="match status" value="1"/>
</dbReference>
<dbReference type="SUPFAM" id="SSF81321">
    <property type="entry name" value="Family A G protein-coupled receptor-like"/>
    <property type="match status" value="1"/>
</dbReference>
<dbReference type="PROSITE" id="PS00237">
    <property type="entry name" value="G_PROTEIN_RECEP_F1_1"/>
    <property type="match status" value="1"/>
</dbReference>
<dbReference type="PROSITE" id="PS50262">
    <property type="entry name" value="G_PROTEIN_RECEP_F1_2"/>
    <property type="match status" value="1"/>
</dbReference>